<proteinExistence type="evidence at protein level"/>
<reference key="1">
    <citation type="journal article" date="1994" name="Proc. Natl. Acad. Sci. U.S.A.">
        <title>Early auxin-induced genes encode short-lived nuclear proteins.</title>
        <authorList>
            <person name="Abel S."/>
            <person name="Oeller P.W."/>
            <person name="Theologis A."/>
        </authorList>
    </citation>
    <scope>NUCLEOTIDE SEQUENCE [MRNA]</scope>
    <source>
        <strain>cv. Columbia</strain>
    </source>
</reference>
<reference key="2">
    <citation type="online journal article" date="1997" name="Plant Gene Register">
        <title>Molecular characterization of a genomic clone encoding the auxin-inducible IAA2 gene from Arabidopsis thaliana.</title>
        <authorList>
            <person name="Malik M.K."/>
            <person name="Zimmerman J.L."/>
        </authorList>
        <locator>PGR97-178</locator>
    </citation>
    <scope>NUCLEOTIDE SEQUENCE [GENOMIC DNA]</scope>
    <source>
        <strain>cv. Wassilewskija</strain>
    </source>
</reference>
<reference key="3">
    <citation type="journal article" date="2000" name="DNA Res.">
        <title>Structural analysis of Arabidopsis thaliana chromosome 3. I. Sequence features of the regions of 4,504,864 bp covered by sixty P1 and TAC clones.</title>
        <authorList>
            <person name="Sato S."/>
            <person name="Nakamura Y."/>
            <person name="Kaneko T."/>
            <person name="Katoh T."/>
            <person name="Asamizu E."/>
            <person name="Tabata S."/>
        </authorList>
    </citation>
    <scope>NUCLEOTIDE SEQUENCE [LARGE SCALE GENOMIC DNA]</scope>
    <source>
        <strain>cv. Columbia</strain>
    </source>
</reference>
<reference key="4">
    <citation type="journal article" date="2017" name="Plant J.">
        <title>Araport11: a complete reannotation of the Arabidopsis thaliana reference genome.</title>
        <authorList>
            <person name="Cheng C.Y."/>
            <person name="Krishnakumar V."/>
            <person name="Chan A.P."/>
            <person name="Thibaud-Nissen F."/>
            <person name="Schobel S."/>
            <person name="Town C.D."/>
        </authorList>
    </citation>
    <scope>GENOME REANNOTATION</scope>
    <source>
        <strain>cv. Columbia</strain>
    </source>
</reference>
<reference key="5">
    <citation type="journal article" date="2003" name="Science">
        <title>Empirical analysis of transcriptional activity in the Arabidopsis genome.</title>
        <authorList>
            <person name="Yamada K."/>
            <person name="Lim J."/>
            <person name="Dale J.M."/>
            <person name="Chen H."/>
            <person name="Shinn P."/>
            <person name="Palm C.J."/>
            <person name="Southwick A.M."/>
            <person name="Wu H.C."/>
            <person name="Kim C.J."/>
            <person name="Nguyen M."/>
            <person name="Pham P.K."/>
            <person name="Cheuk R.F."/>
            <person name="Karlin-Newmann G."/>
            <person name="Liu S.X."/>
            <person name="Lam B."/>
            <person name="Sakano H."/>
            <person name="Wu T."/>
            <person name="Yu G."/>
            <person name="Miranda M."/>
            <person name="Quach H.L."/>
            <person name="Tripp M."/>
            <person name="Chang C.H."/>
            <person name="Lee J.M."/>
            <person name="Toriumi M.J."/>
            <person name="Chan M.M."/>
            <person name="Tang C.C."/>
            <person name="Onodera C.S."/>
            <person name="Deng J.M."/>
            <person name="Akiyama K."/>
            <person name="Ansari Y."/>
            <person name="Arakawa T."/>
            <person name="Banh J."/>
            <person name="Banno F."/>
            <person name="Bowser L."/>
            <person name="Brooks S.Y."/>
            <person name="Carninci P."/>
            <person name="Chao Q."/>
            <person name="Choy N."/>
            <person name="Enju A."/>
            <person name="Goldsmith A.D."/>
            <person name="Gurjal M."/>
            <person name="Hansen N.F."/>
            <person name="Hayashizaki Y."/>
            <person name="Johnson-Hopson C."/>
            <person name="Hsuan V.W."/>
            <person name="Iida K."/>
            <person name="Karnes M."/>
            <person name="Khan S."/>
            <person name="Koesema E."/>
            <person name="Ishida J."/>
            <person name="Jiang P.X."/>
            <person name="Jones T."/>
            <person name="Kawai J."/>
            <person name="Kamiya A."/>
            <person name="Meyers C."/>
            <person name="Nakajima M."/>
            <person name="Narusaka M."/>
            <person name="Seki M."/>
            <person name="Sakurai T."/>
            <person name="Satou M."/>
            <person name="Tamse R."/>
            <person name="Vaysberg M."/>
            <person name="Wallender E.K."/>
            <person name="Wong C."/>
            <person name="Yamamura Y."/>
            <person name="Yuan S."/>
            <person name="Shinozaki K."/>
            <person name="Davis R.W."/>
            <person name="Theologis A."/>
            <person name="Ecker J.R."/>
        </authorList>
    </citation>
    <scope>NUCLEOTIDE SEQUENCE [LARGE SCALE MRNA]</scope>
    <source>
        <strain>cv. Columbia</strain>
    </source>
</reference>
<reference key="6">
    <citation type="journal article" date="1995" name="J. Mol. Biol.">
        <title>The PS-IAA4/5-like family of early auxin-inducible mRNAs in Arabidopsis thaliana.</title>
        <authorList>
            <person name="Abel S."/>
            <person name="Nguyen M.D."/>
            <person name="Theologis A."/>
        </authorList>
    </citation>
    <scope>TISSUE SPECIFICITY</scope>
    <scope>INDUCTION</scope>
</reference>
<reference key="7">
    <citation type="journal article" date="1997" name="Proc. Natl. Acad. Sci. U.S.A.">
        <title>Protein-protein interactions among the Aux/IAA proteins.</title>
        <authorList>
            <person name="Kim J."/>
            <person name="Harter K."/>
            <person name="Theologis A."/>
        </authorList>
    </citation>
    <scope>DIMERIZATION</scope>
</reference>
<reference key="8">
    <citation type="journal article" date="2002" name="Plant Mol. Biol.">
        <title>Genetics of Aux/IAA and ARF action in plant growth and development.</title>
        <authorList>
            <person name="Liscum E."/>
            <person name="Reed J.W."/>
        </authorList>
    </citation>
    <scope>GENE FAMILY</scope>
    <scope>NOMENCLATURE</scope>
    <scope>FUNCTION</scope>
</reference>
<reference key="9">
    <citation type="journal article" date="2004" name="Plant Cell">
        <title>Aux/IAA proteins contain a potent transcriptional repression domain.</title>
        <authorList>
            <person name="Tiwari S.B."/>
            <person name="Hagen G."/>
            <person name="Guilfoyle T.J."/>
        </authorList>
    </citation>
    <scope>TRANSCRIPTIONAL REPRESSION DOMAIN</scope>
</reference>
<reference key="10">
    <citation type="journal article" date="2008" name="Science">
        <title>TOPLESS mediates auxin-dependent transcriptional repression during Arabidopsis embryogenesis.</title>
        <authorList>
            <person name="Szemenyei H."/>
            <person name="Hannon M."/>
            <person name="Long J.A."/>
        </authorList>
    </citation>
    <scope>INTERACTION WITH TPL</scope>
</reference>
<sequence length="174" mass="19910">MAYEKVNELNLKDTELCLGLPGRTEKIKEEQEVSCVKSNNKRLFEETRDEEESTPPTKTQIVGWPPVRSSRKNNNSVSYVKVSMDGAPYLRKIDLKTYKNYPELLKALENMFKVMIGEYCEREGYKGSGFVPTYEDKDGDWMLVGDVPWDMFSSSCKRLRIMKGSDAPALDSSL</sequence>
<comment type="function">
    <text evidence="3">Aux/IAA proteins are short-lived transcriptional factors that function as repressors of early auxin response genes at low auxin concentrations. Repression is thought to result from the interaction with auxin response factors (ARFs), proteins that bind to the auxin-responsive promoter element (AuxRE). Formation of heterodimers with ARF proteins may alter their ability to modulate early auxin response genes expression.</text>
</comment>
<comment type="subunit">
    <text evidence="4">Homodimers and heterodimers. Interacts with the auxin-responsive protein IAA1. Interacts with TPL.</text>
</comment>
<comment type="interaction">
    <interactant intactId="EBI-632343">
        <id>P49678</id>
    </interactant>
    <interactant intactId="EBI-529887">
        <id>Q8RYC8</id>
        <label>ARF19</label>
    </interactant>
    <organismsDiffer>false</organismsDiffer>
    <experiments>3</experiments>
</comment>
<comment type="interaction">
    <interactant intactId="EBI-632343">
        <id>P49678</id>
    </interactant>
    <interactant intactId="EBI-1554169">
        <id>Q9FGV1</id>
        <label>ARF8</label>
    </interactant>
    <organismsDiffer>false</organismsDiffer>
    <experiments>3</experiments>
</comment>
<comment type="interaction">
    <interactant intactId="EBI-632343">
        <id>P49678</id>
    </interactant>
    <interactant intactId="EBI-630505">
        <id>P49677</id>
        <label>IAA1</label>
    </interactant>
    <organismsDiffer>false</organismsDiffer>
    <experiments>13</experiments>
</comment>
<comment type="interaction">
    <interactant intactId="EBI-632343">
        <id>P49678</id>
    </interactant>
    <interactant intactId="EBI-3946434">
        <id>Q38828</id>
        <label>IAA10</label>
    </interactant>
    <organismsDiffer>false</organismsDiffer>
    <experiments>12</experiments>
</comment>
<comment type="interaction">
    <interactant intactId="EBI-632343">
        <id>P49678</id>
    </interactant>
    <interactant intactId="EBI-2367923">
        <id>Q38829</id>
        <label>IAA11</label>
    </interactant>
    <organismsDiffer>false</organismsDiffer>
    <experiments>6</experiments>
</comment>
<comment type="interaction">
    <interactant intactId="EBI-632343">
        <id>P49678</id>
    </interactant>
    <interactant intactId="EBI-617608">
        <id>Q38830</id>
        <label>IAA12</label>
    </interactant>
    <organismsDiffer>false</organismsDiffer>
    <experiments>5</experiments>
</comment>
<comment type="interaction">
    <interactant intactId="EBI-632343">
        <id>P49678</id>
    </interactant>
    <interactant intactId="EBI-1554143">
        <id>Q38831</id>
        <label>IAA13</label>
    </interactant>
    <organismsDiffer>false</organismsDiffer>
    <experiments>8</experiments>
</comment>
<comment type="interaction">
    <interactant intactId="EBI-632343">
        <id>P49678</id>
    </interactant>
    <interactant intactId="EBI-2295562">
        <id>Q38832</id>
        <label>IAA14</label>
    </interactant>
    <organismsDiffer>false</organismsDiffer>
    <experiments>4</experiments>
</comment>
<comment type="interaction">
    <interactant intactId="EBI-632343">
        <id>P49678</id>
    </interactant>
    <interactant intactId="EBI-25524519">
        <id>A0A2H1ZEF6</id>
        <label>IAA15</label>
    </interactant>
    <organismsDiffer>false</organismsDiffer>
    <experiments>3</experiments>
</comment>
<comment type="interaction">
    <interactant intactId="EBI-632343">
        <id>P49678</id>
    </interactant>
    <interactant intactId="EBI-632231">
        <id>O24407</id>
        <label>IAA16</label>
    </interactant>
    <organismsDiffer>false</organismsDiffer>
    <experiments>10</experiments>
</comment>
<comment type="interaction">
    <interactant intactId="EBI-632343">
        <id>P49678</id>
    </interactant>
    <interactant intactId="EBI-632243">
        <id>P93830</id>
        <label>IAA17</label>
    </interactant>
    <organismsDiffer>false</organismsDiffer>
    <experiments>10</experiments>
</comment>
<comment type="interaction">
    <interactant intactId="EBI-632343">
        <id>P49678</id>
    </interactant>
    <interactant intactId="EBI-2295525">
        <id>O24408</id>
        <label>IAA18</label>
    </interactant>
    <organismsDiffer>false</organismsDiffer>
    <experiments>4</experiments>
</comment>
<comment type="interaction">
    <interactant intactId="EBI-632343">
        <id>P49678</id>
    </interactant>
    <interactant intactId="EBI-632257">
        <id>O24409</id>
        <label>IAA19</label>
    </interactant>
    <organismsDiffer>false</organismsDiffer>
    <experiments>10</experiments>
</comment>
<comment type="interaction">
    <interactant intactId="EBI-632343">
        <id>P49678</id>
    </interactant>
    <interactant intactId="EBI-632343">
        <id>P49678</id>
        <label>IAA2</label>
    </interactant>
    <organismsDiffer>false</organismsDiffer>
    <experiments>5</experiments>
</comment>
<comment type="interaction">
    <interactant intactId="EBI-632343">
        <id>P49678</id>
    </interactant>
    <interactant intactId="EBI-632272">
        <id>O24410</id>
        <label>IAA20</label>
    </interactant>
    <organismsDiffer>false</organismsDiffer>
    <experiments>6</experiments>
</comment>
<comment type="interaction">
    <interactant intactId="EBI-632343">
        <id>P49678</id>
    </interactant>
    <interactant intactId="EBI-3947418">
        <id>Q8LAL2</id>
        <label>IAA26</label>
    </interactant>
    <organismsDiffer>false</organismsDiffer>
    <experiments>10</experiments>
</comment>
<comment type="interaction">
    <interactant intactId="EBI-632343">
        <id>P49678</id>
    </interactant>
    <interactant intactId="EBI-3946677">
        <id>Q9ZSY8</id>
        <label>IAA27</label>
    </interactant>
    <organismsDiffer>false</organismsDiffer>
    <experiments>9</experiments>
</comment>
<comment type="interaction">
    <interactant intactId="EBI-632343">
        <id>P49678</id>
    </interactant>
    <interactant intactId="EBI-3133404">
        <id>Q9XFM0</id>
        <label>IAA28</label>
    </interactant>
    <organismsDiffer>false</organismsDiffer>
    <experiments>10</experiments>
</comment>
<comment type="interaction">
    <interactant intactId="EBI-632343">
        <id>P49678</id>
    </interactant>
    <interactant intactId="EBI-307174">
        <id>Q38822</id>
        <label>IAA3</label>
    </interactant>
    <organismsDiffer>false</organismsDiffer>
    <experiments>12</experiments>
</comment>
<comment type="interaction">
    <interactant intactId="EBI-632343">
        <id>P49678</id>
    </interactant>
    <interactant intactId="EBI-3946448">
        <id>Q8RYC6</id>
        <label>IAA32</label>
    </interactant>
    <organismsDiffer>false</organismsDiffer>
    <experiments>3</experiments>
</comment>
<comment type="interaction">
    <interactant intactId="EBI-632343">
        <id>P49678</id>
    </interactant>
    <interactant intactId="EBI-3946459">
        <id>Q9C5X0</id>
        <label>IAA34</label>
    </interactant>
    <organismsDiffer>false</organismsDiffer>
    <experiments>6</experiments>
</comment>
<comment type="interaction">
    <interactant intactId="EBI-632343">
        <id>P49678</id>
    </interactant>
    <interactant intactId="EBI-632187">
        <id>P33077</id>
        <label>IAA4</label>
    </interactant>
    <organismsDiffer>false</organismsDiffer>
    <experiments>9</experiments>
</comment>
<comment type="interaction">
    <interactant intactId="EBI-632343">
        <id>P49678</id>
    </interactant>
    <interactant intactId="EBI-3946487">
        <id>P33078</id>
        <label>IAA5</label>
    </interactant>
    <organismsDiffer>false</organismsDiffer>
    <experiments>7</experiments>
</comment>
<comment type="interaction">
    <interactant intactId="EBI-632343">
        <id>P49678</id>
    </interactant>
    <interactant intactId="EBI-1554124">
        <id>Q38824</id>
        <label>IAA6</label>
    </interactant>
    <organismsDiffer>false</organismsDiffer>
    <experiments>7</experiments>
</comment>
<comment type="interaction">
    <interactant intactId="EBI-632343">
        <id>P49678</id>
    </interactant>
    <interactant intactId="EBI-602959">
        <id>Q38825</id>
        <label>IAA7</label>
    </interactant>
    <organismsDiffer>false</organismsDiffer>
    <experiments>7</experiments>
</comment>
<comment type="interaction">
    <interactant intactId="EBI-632343">
        <id>P49678</id>
    </interactant>
    <interactant intactId="EBI-632200">
        <id>Q38826</id>
        <label>IAA8</label>
    </interactant>
    <organismsDiffer>false</organismsDiffer>
    <experiments>7</experiments>
</comment>
<comment type="interaction">
    <interactant intactId="EBI-632343">
        <id>P49678</id>
    </interactant>
    <interactant intactId="EBI-632216">
        <id>Q38827</id>
        <label>IAA9</label>
    </interactant>
    <organismsDiffer>false</organismsDiffer>
    <experiments>4</experiments>
</comment>
<comment type="interaction">
    <interactant intactId="EBI-632343">
        <id>P49678</id>
    </interactant>
    <interactant intactId="EBI-4445335">
        <id>Q5XEN5</id>
        <label>MBD1</label>
    </interactant>
    <organismsDiffer>false</organismsDiffer>
    <experiments>7</experiments>
</comment>
<comment type="interaction">
    <interactant intactId="EBI-632343">
        <id>P49678</id>
    </interactant>
    <interactant intactId="EBI-15191715">
        <id>Q9LYB9</id>
        <label>MBD4</label>
    </interactant>
    <organismsDiffer>false</organismsDiffer>
    <experiments>4</experiments>
</comment>
<comment type="interaction">
    <interactant intactId="EBI-632343">
        <id>P49678</id>
    </interactant>
    <interactant intactId="EBI-963647">
        <id>Q9C8Y3</id>
        <label>RGL1</label>
    </interactant>
    <organismsDiffer>false</organismsDiffer>
    <experiments>3</experiments>
</comment>
<comment type="subcellular location">
    <subcellularLocation>
        <location>Nucleus</location>
    </subcellularLocation>
</comment>
<comment type="tissue specificity">
    <text evidence="5">Preferentially expressed in vegetative organs.</text>
</comment>
<comment type="induction">
    <text evidence="5">By auxin.</text>
</comment>
<comment type="domain">
    <text>The N-terminal half of the protein contains two conserved domains I and II. Domain I includes a slightly degenerated ERF-associated amphiphilic repression (EAR) motif which seems to be involved in the activity of transcriptional repression. Domain II is required for the correct degradation of the protein through the SCF-mediated ubiquitin-proteasome pathway. Interactions between Aux/IAA proteins and auxin response factors (ARFs) occur through their C-terminal dimerization domains III and IV.</text>
</comment>
<comment type="similarity">
    <text evidence="6">Belongs to the Aux/IAA family.</text>
</comment>
<evidence type="ECO:0000255" key="1">
    <source>
        <dbReference type="PROSITE-ProRule" id="PRU01081"/>
    </source>
</evidence>
<evidence type="ECO:0000256" key="2">
    <source>
        <dbReference type="SAM" id="MobiDB-lite"/>
    </source>
</evidence>
<evidence type="ECO:0000269" key="3">
    <source>
    </source>
</evidence>
<evidence type="ECO:0000269" key="4">
    <source>
    </source>
</evidence>
<evidence type="ECO:0000269" key="5">
    <source>
    </source>
</evidence>
<evidence type="ECO:0000305" key="6"/>
<keyword id="KW-0927">Auxin signaling pathway</keyword>
<keyword id="KW-0539">Nucleus</keyword>
<keyword id="KW-1185">Reference proteome</keyword>
<keyword id="KW-0678">Repressor</keyword>
<keyword id="KW-0804">Transcription</keyword>
<keyword id="KW-0805">Transcription regulation</keyword>
<protein>
    <recommendedName>
        <fullName>Auxin-responsive protein IAA2</fullName>
    </recommendedName>
    <alternativeName>
        <fullName>Indoleacetic acid-induced protein 2</fullName>
    </alternativeName>
</protein>
<organism>
    <name type="scientific">Arabidopsis thaliana</name>
    <name type="common">Mouse-ear cress</name>
    <dbReference type="NCBI Taxonomy" id="3702"/>
    <lineage>
        <taxon>Eukaryota</taxon>
        <taxon>Viridiplantae</taxon>
        <taxon>Streptophyta</taxon>
        <taxon>Embryophyta</taxon>
        <taxon>Tracheophyta</taxon>
        <taxon>Spermatophyta</taxon>
        <taxon>Magnoliopsida</taxon>
        <taxon>eudicotyledons</taxon>
        <taxon>Gunneridae</taxon>
        <taxon>Pentapetalae</taxon>
        <taxon>rosids</taxon>
        <taxon>malvids</taxon>
        <taxon>Brassicales</taxon>
        <taxon>Brassicaceae</taxon>
        <taxon>Camelineae</taxon>
        <taxon>Arabidopsis</taxon>
    </lineage>
</organism>
<name>IAA2_ARATH</name>
<gene>
    <name type="primary">IAA2</name>
    <name type="ordered locus">At3g23030</name>
    <name type="ORF">MXC7.6</name>
</gene>
<dbReference type="EMBL" id="L15449">
    <property type="protein sequence ID" value="AAA16570.1"/>
    <property type="molecule type" value="mRNA"/>
</dbReference>
<dbReference type="EMBL" id="AF027157">
    <property type="protein sequence ID" value="AAB97164.1"/>
    <property type="molecule type" value="Genomic_DNA"/>
</dbReference>
<dbReference type="EMBL" id="AB026655">
    <property type="protein sequence ID" value="BAB02094.1"/>
    <property type="molecule type" value="Genomic_DNA"/>
</dbReference>
<dbReference type="EMBL" id="CP002686">
    <property type="protein sequence ID" value="AEE76707.1"/>
    <property type="molecule type" value="Genomic_DNA"/>
</dbReference>
<dbReference type="EMBL" id="AF332392">
    <property type="protein sequence ID" value="AAG48756.1"/>
    <property type="molecule type" value="mRNA"/>
</dbReference>
<dbReference type="RefSeq" id="NP_188943.1">
    <property type="nucleotide sequence ID" value="NM_113203.5"/>
</dbReference>
<dbReference type="SMR" id="P49678"/>
<dbReference type="BioGRID" id="7209">
    <property type="interactions" value="52"/>
</dbReference>
<dbReference type="ELM" id="P49678"/>
<dbReference type="FunCoup" id="P49678">
    <property type="interactions" value="290"/>
</dbReference>
<dbReference type="IntAct" id="P49678">
    <property type="interactions" value="48"/>
</dbReference>
<dbReference type="STRING" id="3702.P49678"/>
<dbReference type="iPTMnet" id="P49678"/>
<dbReference type="PaxDb" id="3702-AT3G23030.1"/>
<dbReference type="ProteomicsDB" id="232142"/>
<dbReference type="EnsemblPlants" id="AT3G23030.1">
    <property type="protein sequence ID" value="AT3G23030.1"/>
    <property type="gene ID" value="AT3G23030"/>
</dbReference>
<dbReference type="GeneID" id="821877"/>
<dbReference type="Gramene" id="AT3G23030.1">
    <property type="protein sequence ID" value="AT3G23030.1"/>
    <property type="gene ID" value="AT3G23030"/>
</dbReference>
<dbReference type="KEGG" id="ath:AT3G23030"/>
<dbReference type="Araport" id="AT3G23030"/>
<dbReference type="TAIR" id="AT3G23030">
    <property type="gene designation" value="IAA2"/>
</dbReference>
<dbReference type="eggNOG" id="ENOG502QU81">
    <property type="taxonomic scope" value="Eukaryota"/>
</dbReference>
<dbReference type="HOGENOM" id="CLU_049393_0_1_1"/>
<dbReference type="InParanoid" id="P49678"/>
<dbReference type="OrthoDB" id="1926344at2759"/>
<dbReference type="PhylomeDB" id="P49678"/>
<dbReference type="PRO" id="PR:P49678"/>
<dbReference type="Proteomes" id="UP000006548">
    <property type="component" value="Chromosome 3"/>
</dbReference>
<dbReference type="ExpressionAtlas" id="P49678">
    <property type="expression patterns" value="baseline and differential"/>
</dbReference>
<dbReference type="GO" id="GO:0005634">
    <property type="term" value="C:nucleus"/>
    <property type="evidence" value="ECO:0000314"/>
    <property type="project" value="TAIR"/>
</dbReference>
<dbReference type="GO" id="GO:0003700">
    <property type="term" value="F:DNA-binding transcription factor activity"/>
    <property type="evidence" value="ECO:0000250"/>
    <property type="project" value="TAIR"/>
</dbReference>
<dbReference type="GO" id="GO:0042802">
    <property type="term" value="F:identical protein binding"/>
    <property type="evidence" value="ECO:0000353"/>
    <property type="project" value="IntAct"/>
</dbReference>
<dbReference type="GO" id="GO:0000976">
    <property type="term" value="F:transcription cis-regulatory region binding"/>
    <property type="evidence" value="ECO:0000353"/>
    <property type="project" value="TAIR"/>
</dbReference>
<dbReference type="GO" id="GO:0009734">
    <property type="term" value="P:auxin-activated signaling pathway"/>
    <property type="evidence" value="ECO:0007669"/>
    <property type="project" value="UniProtKB-KW"/>
</dbReference>
<dbReference type="GO" id="GO:0009733">
    <property type="term" value="P:response to auxin"/>
    <property type="evidence" value="ECO:0000270"/>
    <property type="project" value="TAIR"/>
</dbReference>
<dbReference type="FunFam" id="3.10.20.90:FF:000078">
    <property type="entry name" value="Auxin-responsive protein"/>
    <property type="match status" value="1"/>
</dbReference>
<dbReference type="Gene3D" id="3.10.20.90">
    <property type="entry name" value="Phosphatidylinositol 3-kinase Catalytic Subunit, Chain A, domain 1"/>
    <property type="match status" value="1"/>
</dbReference>
<dbReference type="InterPro" id="IPR033389">
    <property type="entry name" value="AUX/IAA_dom"/>
</dbReference>
<dbReference type="InterPro" id="IPR003311">
    <property type="entry name" value="AUX_IAA"/>
</dbReference>
<dbReference type="InterPro" id="IPR053793">
    <property type="entry name" value="PB1-like"/>
</dbReference>
<dbReference type="PANTHER" id="PTHR31734">
    <property type="entry name" value="AUXIN-RESPONSIVE PROTEIN IAA17"/>
    <property type="match status" value="1"/>
</dbReference>
<dbReference type="PANTHER" id="PTHR31734:SF222">
    <property type="entry name" value="AUXIN-RESPONSIVE PROTEIN IAA2"/>
    <property type="match status" value="1"/>
</dbReference>
<dbReference type="Pfam" id="PF02309">
    <property type="entry name" value="AUX_IAA"/>
    <property type="match status" value="1"/>
</dbReference>
<dbReference type="SUPFAM" id="SSF54277">
    <property type="entry name" value="CAD &amp; PB1 domains"/>
    <property type="match status" value="1"/>
</dbReference>
<dbReference type="PROSITE" id="PS51745">
    <property type="entry name" value="PB1"/>
    <property type="match status" value="1"/>
</dbReference>
<feature type="chain" id="PRO_0000112833" description="Auxin-responsive protein IAA2">
    <location>
        <begin position="1"/>
        <end position="174"/>
    </location>
</feature>
<feature type="domain" description="PB1" evidence="1">
    <location>
        <begin position="77"/>
        <end position="164"/>
    </location>
</feature>
<feature type="region of interest" description="Disordered" evidence="2">
    <location>
        <begin position="44"/>
        <end position="67"/>
    </location>
</feature>
<feature type="short sequence motif" description="EAR-like (transcriptional repression)">
    <location>
        <begin position="16"/>
        <end position="20"/>
    </location>
</feature>
<feature type="sequence conflict" description="In Ref. 2; AAB97164." evidence="6" ref="2">
    <original>S</original>
    <variation>I</variation>
    <location>
        <position position="38"/>
    </location>
</feature>
<accession>P49678</accession>
<accession>O22596</accession>